<dbReference type="EC" id="2.7.8.13" evidence="1"/>
<dbReference type="EMBL" id="CP000961">
    <property type="protein sequence ID" value="ACA88786.1"/>
    <property type="molecule type" value="Genomic_DNA"/>
</dbReference>
<dbReference type="RefSeq" id="WP_012327112.1">
    <property type="nucleotide sequence ID" value="NC_010506.1"/>
</dbReference>
<dbReference type="SMR" id="B1KKY0"/>
<dbReference type="STRING" id="392500.Swoo_4536"/>
<dbReference type="KEGG" id="swd:Swoo_4536"/>
<dbReference type="eggNOG" id="COG0472">
    <property type="taxonomic scope" value="Bacteria"/>
</dbReference>
<dbReference type="HOGENOM" id="CLU_023982_0_0_6"/>
<dbReference type="UniPathway" id="UPA00219"/>
<dbReference type="Proteomes" id="UP000002168">
    <property type="component" value="Chromosome"/>
</dbReference>
<dbReference type="GO" id="GO:0005886">
    <property type="term" value="C:plasma membrane"/>
    <property type="evidence" value="ECO:0007669"/>
    <property type="project" value="UniProtKB-SubCell"/>
</dbReference>
<dbReference type="GO" id="GO:0046872">
    <property type="term" value="F:metal ion binding"/>
    <property type="evidence" value="ECO:0007669"/>
    <property type="project" value="UniProtKB-KW"/>
</dbReference>
<dbReference type="GO" id="GO:0008963">
    <property type="term" value="F:phospho-N-acetylmuramoyl-pentapeptide-transferase activity"/>
    <property type="evidence" value="ECO:0007669"/>
    <property type="project" value="UniProtKB-UniRule"/>
</dbReference>
<dbReference type="GO" id="GO:0051992">
    <property type="term" value="F:UDP-N-acetylmuramoyl-L-alanyl-D-glutamyl-meso-2,6-diaminopimelyl-D-alanyl-D-alanine:undecaprenyl-phosphate transferase activity"/>
    <property type="evidence" value="ECO:0007669"/>
    <property type="project" value="RHEA"/>
</dbReference>
<dbReference type="GO" id="GO:0051301">
    <property type="term" value="P:cell division"/>
    <property type="evidence" value="ECO:0007669"/>
    <property type="project" value="UniProtKB-KW"/>
</dbReference>
<dbReference type="GO" id="GO:0071555">
    <property type="term" value="P:cell wall organization"/>
    <property type="evidence" value="ECO:0007669"/>
    <property type="project" value="UniProtKB-KW"/>
</dbReference>
<dbReference type="GO" id="GO:0009252">
    <property type="term" value="P:peptidoglycan biosynthetic process"/>
    <property type="evidence" value="ECO:0007669"/>
    <property type="project" value="UniProtKB-UniRule"/>
</dbReference>
<dbReference type="GO" id="GO:0008360">
    <property type="term" value="P:regulation of cell shape"/>
    <property type="evidence" value="ECO:0007669"/>
    <property type="project" value="UniProtKB-KW"/>
</dbReference>
<dbReference type="CDD" id="cd06852">
    <property type="entry name" value="GT_MraY"/>
    <property type="match status" value="1"/>
</dbReference>
<dbReference type="HAMAP" id="MF_00038">
    <property type="entry name" value="MraY"/>
    <property type="match status" value="1"/>
</dbReference>
<dbReference type="InterPro" id="IPR000715">
    <property type="entry name" value="Glycosyl_transferase_4"/>
</dbReference>
<dbReference type="InterPro" id="IPR003524">
    <property type="entry name" value="PNAcMuramoyl-5peptid_Trfase"/>
</dbReference>
<dbReference type="InterPro" id="IPR018480">
    <property type="entry name" value="PNAcMuramoyl-5peptid_Trfase_CS"/>
</dbReference>
<dbReference type="NCBIfam" id="TIGR00445">
    <property type="entry name" value="mraY"/>
    <property type="match status" value="1"/>
</dbReference>
<dbReference type="PANTHER" id="PTHR22926">
    <property type="entry name" value="PHOSPHO-N-ACETYLMURAMOYL-PENTAPEPTIDE-TRANSFERASE"/>
    <property type="match status" value="1"/>
</dbReference>
<dbReference type="PANTHER" id="PTHR22926:SF5">
    <property type="entry name" value="PHOSPHO-N-ACETYLMURAMOYL-PENTAPEPTIDE-TRANSFERASE HOMOLOG"/>
    <property type="match status" value="1"/>
</dbReference>
<dbReference type="Pfam" id="PF00953">
    <property type="entry name" value="Glycos_transf_4"/>
    <property type="match status" value="1"/>
</dbReference>
<dbReference type="Pfam" id="PF10555">
    <property type="entry name" value="MraY_sig1"/>
    <property type="match status" value="1"/>
</dbReference>
<dbReference type="PROSITE" id="PS01347">
    <property type="entry name" value="MRAY_1"/>
    <property type="match status" value="1"/>
</dbReference>
<dbReference type="PROSITE" id="PS01348">
    <property type="entry name" value="MRAY_2"/>
    <property type="match status" value="1"/>
</dbReference>
<proteinExistence type="inferred from homology"/>
<evidence type="ECO:0000255" key="1">
    <source>
        <dbReference type="HAMAP-Rule" id="MF_00038"/>
    </source>
</evidence>
<sequence length="360" mass="39863">MLVYLAEYLTQFYTGFNVFSYVTFRAILGLMTALMFSLWWGPKMIERLQMLQIGQIVRNDGPESHFSKRGTPTMGGILILAGVFISVLLWGDLGSRYVWVVLFVLASFGLIGFIDDYRKVVRKDTKGLIAKWKYILQSLAALVIAFYLYASADMTGETQLVVPFFKDIMPQLGGFFIVLAYFTIVGSSNAVNLTDGLDGLAIMPTVMVAAAFALIAYLSGHVQFANYLHLPYLPGAGELVIVCTAIVGAGLGFLWFNTYPAQVFMGDVGSLSLGAALGAIAVLVRQEILLVIMGGVFVMETVSVILQVGSYKLRGQRIFRMAPIHHHYELKGWPEPRVIVRFWIISLFLVLLGLATLKLR</sequence>
<protein>
    <recommendedName>
        <fullName evidence="1">Phospho-N-acetylmuramoyl-pentapeptide-transferase</fullName>
        <ecNumber evidence="1">2.7.8.13</ecNumber>
    </recommendedName>
    <alternativeName>
        <fullName evidence="1">UDP-MurNAc-pentapeptide phosphotransferase</fullName>
    </alternativeName>
</protein>
<keyword id="KW-0131">Cell cycle</keyword>
<keyword id="KW-0132">Cell division</keyword>
<keyword id="KW-0997">Cell inner membrane</keyword>
<keyword id="KW-1003">Cell membrane</keyword>
<keyword id="KW-0133">Cell shape</keyword>
<keyword id="KW-0961">Cell wall biogenesis/degradation</keyword>
<keyword id="KW-0460">Magnesium</keyword>
<keyword id="KW-0472">Membrane</keyword>
<keyword id="KW-0479">Metal-binding</keyword>
<keyword id="KW-0573">Peptidoglycan synthesis</keyword>
<keyword id="KW-1185">Reference proteome</keyword>
<keyword id="KW-0808">Transferase</keyword>
<keyword id="KW-0812">Transmembrane</keyword>
<keyword id="KW-1133">Transmembrane helix</keyword>
<organism>
    <name type="scientific">Shewanella woodyi (strain ATCC 51908 / MS32)</name>
    <dbReference type="NCBI Taxonomy" id="392500"/>
    <lineage>
        <taxon>Bacteria</taxon>
        <taxon>Pseudomonadati</taxon>
        <taxon>Pseudomonadota</taxon>
        <taxon>Gammaproteobacteria</taxon>
        <taxon>Alteromonadales</taxon>
        <taxon>Shewanellaceae</taxon>
        <taxon>Shewanella</taxon>
    </lineage>
</organism>
<feature type="chain" id="PRO_1000090672" description="Phospho-N-acetylmuramoyl-pentapeptide-transferase">
    <location>
        <begin position="1"/>
        <end position="360"/>
    </location>
</feature>
<feature type="transmembrane region" description="Helical" evidence="1">
    <location>
        <begin position="21"/>
        <end position="41"/>
    </location>
</feature>
<feature type="transmembrane region" description="Helical" evidence="1">
    <location>
        <begin position="74"/>
        <end position="94"/>
    </location>
</feature>
<feature type="transmembrane region" description="Helical" evidence="1">
    <location>
        <begin position="97"/>
        <end position="117"/>
    </location>
</feature>
<feature type="transmembrane region" description="Helical" evidence="1">
    <location>
        <begin position="134"/>
        <end position="154"/>
    </location>
</feature>
<feature type="transmembrane region" description="Helical" evidence="1">
    <location>
        <begin position="168"/>
        <end position="188"/>
    </location>
</feature>
<feature type="transmembrane region" description="Helical" evidence="1">
    <location>
        <begin position="199"/>
        <end position="219"/>
    </location>
</feature>
<feature type="transmembrane region" description="Helical" evidence="1">
    <location>
        <begin position="236"/>
        <end position="256"/>
    </location>
</feature>
<feature type="transmembrane region" description="Helical" evidence="1">
    <location>
        <begin position="263"/>
        <end position="283"/>
    </location>
</feature>
<feature type="transmembrane region" description="Helical" evidence="1">
    <location>
        <begin position="288"/>
        <end position="308"/>
    </location>
</feature>
<feature type="transmembrane region" description="Helical" evidence="1">
    <location>
        <begin position="338"/>
        <end position="358"/>
    </location>
</feature>
<comment type="function">
    <text evidence="1">Catalyzes the initial step of the lipid cycle reactions in the biosynthesis of the cell wall peptidoglycan: transfers peptidoglycan precursor phospho-MurNAc-pentapeptide from UDP-MurNAc-pentapeptide onto the lipid carrier undecaprenyl phosphate, yielding undecaprenyl-pyrophosphoryl-MurNAc-pentapeptide, known as lipid I.</text>
</comment>
<comment type="catalytic activity">
    <reaction evidence="1">
        <text>UDP-N-acetyl-alpha-D-muramoyl-L-alanyl-gamma-D-glutamyl-meso-2,6-diaminopimeloyl-D-alanyl-D-alanine + di-trans,octa-cis-undecaprenyl phosphate = di-trans,octa-cis-undecaprenyl diphospho-N-acetyl-alpha-D-muramoyl-L-alanyl-D-glutamyl-meso-2,6-diaminopimeloyl-D-alanyl-D-alanine + UMP</text>
        <dbReference type="Rhea" id="RHEA:28386"/>
        <dbReference type="ChEBI" id="CHEBI:57865"/>
        <dbReference type="ChEBI" id="CHEBI:60392"/>
        <dbReference type="ChEBI" id="CHEBI:61386"/>
        <dbReference type="ChEBI" id="CHEBI:61387"/>
        <dbReference type="EC" id="2.7.8.13"/>
    </reaction>
</comment>
<comment type="cofactor">
    <cofactor evidence="1">
        <name>Mg(2+)</name>
        <dbReference type="ChEBI" id="CHEBI:18420"/>
    </cofactor>
</comment>
<comment type="pathway">
    <text evidence="1">Cell wall biogenesis; peptidoglycan biosynthesis.</text>
</comment>
<comment type="subcellular location">
    <subcellularLocation>
        <location evidence="1">Cell inner membrane</location>
        <topology evidence="1">Multi-pass membrane protein</topology>
    </subcellularLocation>
</comment>
<comment type="similarity">
    <text evidence="1">Belongs to the glycosyltransferase 4 family. MraY subfamily.</text>
</comment>
<gene>
    <name evidence="1" type="primary">mraY</name>
    <name type="ordered locus">Swoo_4536</name>
</gene>
<name>MRAY_SHEWM</name>
<reference key="1">
    <citation type="submission" date="2008-02" db="EMBL/GenBank/DDBJ databases">
        <title>Complete sequence of Shewanella woodyi ATCC 51908.</title>
        <authorList>
            <consortium name="US DOE Joint Genome Institute"/>
            <person name="Copeland A."/>
            <person name="Lucas S."/>
            <person name="Lapidus A."/>
            <person name="Glavina del Rio T."/>
            <person name="Dalin E."/>
            <person name="Tice H."/>
            <person name="Bruce D."/>
            <person name="Goodwin L."/>
            <person name="Pitluck S."/>
            <person name="Sims D."/>
            <person name="Brettin T."/>
            <person name="Detter J.C."/>
            <person name="Han C."/>
            <person name="Kuske C.R."/>
            <person name="Schmutz J."/>
            <person name="Larimer F."/>
            <person name="Land M."/>
            <person name="Hauser L."/>
            <person name="Kyrpides N."/>
            <person name="Lykidis A."/>
            <person name="Zhao J.-S."/>
            <person name="Richardson P."/>
        </authorList>
    </citation>
    <scope>NUCLEOTIDE SEQUENCE [LARGE SCALE GENOMIC DNA]</scope>
    <source>
        <strain>ATCC 51908 / MS32</strain>
    </source>
</reference>
<accession>B1KKY0</accession>